<evidence type="ECO:0000250" key="1"/>
<evidence type="ECO:0000255" key="2">
    <source>
        <dbReference type="HAMAP-Rule" id="MF_00054"/>
    </source>
</evidence>
<sequence>MARTTPIARYRNIGISAHIDAGKTTTTERILFYTGVNHKIGEVHDGAATMDWMEQEQERGITITSAATTAFWSGMAKQYEPHRINIIDTPGHVDFTIEVERSMRVLDGAVMVYCAVGGVQPQSETVWRQANKYKVPRIAFVNKMDRMGANFLKVVNQIKTRLGANPVPLQLAIGAEEHFTGVVDLVKMKAINWNDADQGVTFEYEDIPADMVELANEWHQNLIESAAEASEELMEKYLGGEELTEAEIKGALRQRVLNNEIILVTCGSAFKNKGVQAMLDAVIDYLPSPVDVPAINGILDDGKDTPAERHASDDEPFSALAFKIATDPFVGNLTFFRVYSGVVNSGDTVLNSVKAARERFGRIVQMHANKREEIKEVRAGDIAAAIGLKDVTTGDTLCDPDAPIILERMEFPEPVISIAVEPKTKADQEKMGLALGRLAKEDPSFRVWTDEESNQTIIAGMGELHLDIIVDRMKREFNVEANVGKPQVAYRETIRQKVTDVEGKHAKQSGGRGQYGHVVIDMYPLEPGSNPKGYEFINDIKGGVIPGEYIPAVDKGIQEQLKAGPLAGYPVVDMGIRLHFGSYHDVDSSELAFKLAASIAFKEGFKKAKPVLLEPIMKVEVETPEENTGDVIGDLSRRRGMLKGQESEVTGVKIHAEVPLSEMFGYATQLRSLTKGRASYTMEFLKYDEAPSNVAQAVIEARGK</sequence>
<protein>
    <recommendedName>
        <fullName evidence="2">Elongation factor G</fullName>
        <shortName evidence="2">EF-G</shortName>
    </recommendedName>
</protein>
<comment type="function">
    <text evidence="2">Catalyzes the GTP-dependent ribosomal translocation step during translation elongation. During this step, the ribosome changes from the pre-translocational (PRE) to the post-translocational (POST) state as the newly formed A-site-bound peptidyl-tRNA and P-site-bound deacylated tRNA move to the P and E sites, respectively. Catalyzes the coordinated movement of the two tRNA molecules, the mRNA and conformational changes in the ribosome.</text>
</comment>
<comment type="subcellular location">
    <subcellularLocation>
        <location evidence="2">Cytoplasm</location>
    </subcellularLocation>
</comment>
<comment type="similarity">
    <text evidence="2">Belongs to the TRAFAC class translation factor GTPase superfamily. Classic translation factor GTPase family. EF-G/EF-2 subfamily.</text>
</comment>
<reference key="1">
    <citation type="journal article" date="2008" name="J. Bacteriol.">
        <title>The pangenome structure of Escherichia coli: comparative genomic analysis of E. coli commensal and pathogenic isolates.</title>
        <authorList>
            <person name="Rasko D.A."/>
            <person name="Rosovitz M.J."/>
            <person name="Myers G.S.A."/>
            <person name="Mongodin E.F."/>
            <person name="Fricke W.F."/>
            <person name="Gajer P."/>
            <person name="Crabtree J."/>
            <person name="Sebaihia M."/>
            <person name="Thomson N.R."/>
            <person name="Chaudhuri R."/>
            <person name="Henderson I.R."/>
            <person name="Sperandio V."/>
            <person name="Ravel J."/>
        </authorList>
    </citation>
    <scope>NUCLEOTIDE SEQUENCE [LARGE SCALE GENOMIC DNA]</scope>
    <source>
        <strain>E24377A / ETEC</strain>
    </source>
</reference>
<gene>
    <name evidence="2" type="primary">fusA</name>
    <name type="ordered locus">EcE24377A_3809</name>
</gene>
<keyword id="KW-0007">Acetylation</keyword>
<keyword id="KW-0963">Cytoplasm</keyword>
<keyword id="KW-0251">Elongation factor</keyword>
<keyword id="KW-0342">GTP-binding</keyword>
<keyword id="KW-0547">Nucleotide-binding</keyword>
<keyword id="KW-0648">Protein biosynthesis</keyword>
<keyword id="KW-1185">Reference proteome</keyword>
<feature type="chain" id="PRO_1000057388" description="Elongation factor G">
    <location>
        <begin position="1"/>
        <end position="704"/>
    </location>
</feature>
<feature type="domain" description="tr-type G">
    <location>
        <begin position="8"/>
        <end position="290"/>
    </location>
</feature>
<feature type="binding site" evidence="2">
    <location>
        <begin position="17"/>
        <end position="24"/>
    </location>
    <ligand>
        <name>GTP</name>
        <dbReference type="ChEBI" id="CHEBI:37565"/>
    </ligand>
</feature>
<feature type="binding site" evidence="2">
    <location>
        <begin position="88"/>
        <end position="92"/>
    </location>
    <ligand>
        <name>GTP</name>
        <dbReference type="ChEBI" id="CHEBI:37565"/>
    </ligand>
</feature>
<feature type="binding site" evidence="2">
    <location>
        <begin position="142"/>
        <end position="145"/>
    </location>
    <ligand>
        <name>GTP</name>
        <dbReference type="ChEBI" id="CHEBI:37565"/>
    </ligand>
</feature>
<feature type="modified residue" description="N6-acetyllysine" evidence="1">
    <location>
        <position position="504"/>
    </location>
</feature>
<feature type="modified residue" description="N6-acetyllysine" evidence="1">
    <location>
        <position position="643"/>
    </location>
</feature>
<name>EFG_ECO24</name>
<dbReference type="EMBL" id="CP000800">
    <property type="protein sequence ID" value="ABV18780.1"/>
    <property type="molecule type" value="Genomic_DNA"/>
</dbReference>
<dbReference type="RefSeq" id="WP_000124700.1">
    <property type="nucleotide sequence ID" value="NC_009801.1"/>
</dbReference>
<dbReference type="SMR" id="A7ZSL5"/>
<dbReference type="GeneID" id="93778658"/>
<dbReference type="KEGG" id="ecw:EcE24377A_3809"/>
<dbReference type="HOGENOM" id="CLU_002794_4_1_6"/>
<dbReference type="Proteomes" id="UP000001122">
    <property type="component" value="Chromosome"/>
</dbReference>
<dbReference type="GO" id="GO:0005737">
    <property type="term" value="C:cytoplasm"/>
    <property type="evidence" value="ECO:0007669"/>
    <property type="project" value="UniProtKB-SubCell"/>
</dbReference>
<dbReference type="GO" id="GO:0005525">
    <property type="term" value="F:GTP binding"/>
    <property type="evidence" value="ECO:0007669"/>
    <property type="project" value="UniProtKB-UniRule"/>
</dbReference>
<dbReference type="GO" id="GO:0003924">
    <property type="term" value="F:GTPase activity"/>
    <property type="evidence" value="ECO:0007669"/>
    <property type="project" value="InterPro"/>
</dbReference>
<dbReference type="GO" id="GO:0097216">
    <property type="term" value="F:guanosine tetraphosphate binding"/>
    <property type="evidence" value="ECO:0007669"/>
    <property type="project" value="UniProtKB-ARBA"/>
</dbReference>
<dbReference type="GO" id="GO:0003746">
    <property type="term" value="F:translation elongation factor activity"/>
    <property type="evidence" value="ECO:0007669"/>
    <property type="project" value="UniProtKB-UniRule"/>
</dbReference>
<dbReference type="GO" id="GO:0032790">
    <property type="term" value="P:ribosome disassembly"/>
    <property type="evidence" value="ECO:0007669"/>
    <property type="project" value="TreeGrafter"/>
</dbReference>
<dbReference type="CDD" id="cd01886">
    <property type="entry name" value="EF-G"/>
    <property type="match status" value="1"/>
</dbReference>
<dbReference type="CDD" id="cd16262">
    <property type="entry name" value="EFG_III"/>
    <property type="match status" value="1"/>
</dbReference>
<dbReference type="CDD" id="cd01434">
    <property type="entry name" value="EFG_mtEFG1_IV"/>
    <property type="match status" value="1"/>
</dbReference>
<dbReference type="CDD" id="cd03713">
    <property type="entry name" value="EFG_mtEFG_C"/>
    <property type="match status" value="1"/>
</dbReference>
<dbReference type="CDD" id="cd04088">
    <property type="entry name" value="EFG_mtEFG_II"/>
    <property type="match status" value="1"/>
</dbReference>
<dbReference type="FunFam" id="2.40.30.10:FF:000006">
    <property type="entry name" value="Elongation factor G"/>
    <property type="match status" value="1"/>
</dbReference>
<dbReference type="FunFam" id="3.30.230.10:FF:000003">
    <property type="entry name" value="Elongation factor G"/>
    <property type="match status" value="1"/>
</dbReference>
<dbReference type="FunFam" id="3.30.70.240:FF:000001">
    <property type="entry name" value="Elongation factor G"/>
    <property type="match status" value="1"/>
</dbReference>
<dbReference type="FunFam" id="3.30.70.870:FF:000001">
    <property type="entry name" value="Elongation factor G"/>
    <property type="match status" value="1"/>
</dbReference>
<dbReference type="FunFam" id="3.40.50.300:FF:000029">
    <property type="entry name" value="Elongation factor G"/>
    <property type="match status" value="1"/>
</dbReference>
<dbReference type="Gene3D" id="3.30.230.10">
    <property type="match status" value="1"/>
</dbReference>
<dbReference type="Gene3D" id="3.30.70.240">
    <property type="match status" value="1"/>
</dbReference>
<dbReference type="Gene3D" id="3.30.70.870">
    <property type="entry name" value="Elongation Factor G (Translational Gtpase), domain 3"/>
    <property type="match status" value="1"/>
</dbReference>
<dbReference type="Gene3D" id="3.40.50.300">
    <property type="entry name" value="P-loop containing nucleotide triphosphate hydrolases"/>
    <property type="match status" value="1"/>
</dbReference>
<dbReference type="Gene3D" id="2.40.30.10">
    <property type="entry name" value="Translation factors"/>
    <property type="match status" value="1"/>
</dbReference>
<dbReference type="HAMAP" id="MF_00054_B">
    <property type="entry name" value="EF_G_EF_2_B"/>
    <property type="match status" value="1"/>
</dbReference>
<dbReference type="InterPro" id="IPR041095">
    <property type="entry name" value="EFG_II"/>
</dbReference>
<dbReference type="InterPro" id="IPR009022">
    <property type="entry name" value="EFG_III"/>
</dbReference>
<dbReference type="InterPro" id="IPR035647">
    <property type="entry name" value="EFG_III/V"/>
</dbReference>
<dbReference type="InterPro" id="IPR047872">
    <property type="entry name" value="EFG_IV"/>
</dbReference>
<dbReference type="InterPro" id="IPR035649">
    <property type="entry name" value="EFG_V"/>
</dbReference>
<dbReference type="InterPro" id="IPR000640">
    <property type="entry name" value="EFG_V-like"/>
</dbReference>
<dbReference type="InterPro" id="IPR004161">
    <property type="entry name" value="EFTu-like_2"/>
</dbReference>
<dbReference type="InterPro" id="IPR031157">
    <property type="entry name" value="G_TR_CS"/>
</dbReference>
<dbReference type="InterPro" id="IPR027417">
    <property type="entry name" value="P-loop_NTPase"/>
</dbReference>
<dbReference type="InterPro" id="IPR020568">
    <property type="entry name" value="Ribosomal_Su5_D2-typ_SF"/>
</dbReference>
<dbReference type="InterPro" id="IPR014721">
    <property type="entry name" value="Ribsml_uS5_D2-typ_fold_subgr"/>
</dbReference>
<dbReference type="InterPro" id="IPR005225">
    <property type="entry name" value="Small_GTP-bd"/>
</dbReference>
<dbReference type="InterPro" id="IPR000795">
    <property type="entry name" value="T_Tr_GTP-bd_dom"/>
</dbReference>
<dbReference type="InterPro" id="IPR009000">
    <property type="entry name" value="Transl_B-barrel_sf"/>
</dbReference>
<dbReference type="InterPro" id="IPR004540">
    <property type="entry name" value="Transl_elong_EFG/EF2"/>
</dbReference>
<dbReference type="InterPro" id="IPR005517">
    <property type="entry name" value="Transl_elong_EFG/EF2_IV"/>
</dbReference>
<dbReference type="NCBIfam" id="TIGR00484">
    <property type="entry name" value="EF-G"/>
    <property type="match status" value="1"/>
</dbReference>
<dbReference type="NCBIfam" id="NF009381">
    <property type="entry name" value="PRK12740.1-5"/>
    <property type="match status" value="1"/>
</dbReference>
<dbReference type="NCBIfam" id="TIGR00231">
    <property type="entry name" value="small_GTP"/>
    <property type="match status" value="1"/>
</dbReference>
<dbReference type="PANTHER" id="PTHR43261:SF1">
    <property type="entry name" value="RIBOSOME-RELEASING FACTOR 2, MITOCHONDRIAL"/>
    <property type="match status" value="1"/>
</dbReference>
<dbReference type="PANTHER" id="PTHR43261">
    <property type="entry name" value="TRANSLATION ELONGATION FACTOR G-RELATED"/>
    <property type="match status" value="1"/>
</dbReference>
<dbReference type="Pfam" id="PF00679">
    <property type="entry name" value="EFG_C"/>
    <property type="match status" value="1"/>
</dbReference>
<dbReference type="Pfam" id="PF14492">
    <property type="entry name" value="EFG_III"/>
    <property type="match status" value="1"/>
</dbReference>
<dbReference type="Pfam" id="PF03764">
    <property type="entry name" value="EFG_IV"/>
    <property type="match status" value="1"/>
</dbReference>
<dbReference type="Pfam" id="PF00009">
    <property type="entry name" value="GTP_EFTU"/>
    <property type="match status" value="1"/>
</dbReference>
<dbReference type="Pfam" id="PF03144">
    <property type="entry name" value="GTP_EFTU_D2"/>
    <property type="match status" value="1"/>
</dbReference>
<dbReference type="PRINTS" id="PR00315">
    <property type="entry name" value="ELONGATNFCT"/>
</dbReference>
<dbReference type="SMART" id="SM00838">
    <property type="entry name" value="EFG_C"/>
    <property type="match status" value="1"/>
</dbReference>
<dbReference type="SMART" id="SM00889">
    <property type="entry name" value="EFG_IV"/>
    <property type="match status" value="1"/>
</dbReference>
<dbReference type="SUPFAM" id="SSF54980">
    <property type="entry name" value="EF-G C-terminal domain-like"/>
    <property type="match status" value="2"/>
</dbReference>
<dbReference type="SUPFAM" id="SSF52540">
    <property type="entry name" value="P-loop containing nucleoside triphosphate hydrolases"/>
    <property type="match status" value="1"/>
</dbReference>
<dbReference type="SUPFAM" id="SSF54211">
    <property type="entry name" value="Ribosomal protein S5 domain 2-like"/>
    <property type="match status" value="1"/>
</dbReference>
<dbReference type="SUPFAM" id="SSF50447">
    <property type="entry name" value="Translation proteins"/>
    <property type="match status" value="1"/>
</dbReference>
<dbReference type="PROSITE" id="PS00301">
    <property type="entry name" value="G_TR_1"/>
    <property type="match status" value="1"/>
</dbReference>
<dbReference type="PROSITE" id="PS51722">
    <property type="entry name" value="G_TR_2"/>
    <property type="match status" value="1"/>
</dbReference>
<accession>A7ZSL5</accession>
<organism>
    <name type="scientific">Escherichia coli O139:H28 (strain E24377A / ETEC)</name>
    <dbReference type="NCBI Taxonomy" id="331111"/>
    <lineage>
        <taxon>Bacteria</taxon>
        <taxon>Pseudomonadati</taxon>
        <taxon>Pseudomonadota</taxon>
        <taxon>Gammaproteobacteria</taxon>
        <taxon>Enterobacterales</taxon>
        <taxon>Enterobacteriaceae</taxon>
        <taxon>Escherichia</taxon>
    </lineage>
</organism>
<proteinExistence type="inferred from homology"/>